<gene>
    <name type="primary">calua</name>
    <name type="ORF">si:ch211-266a5.5</name>
</gene>
<evidence type="ECO:0000250" key="1"/>
<evidence type="ECO:0000250" key="2">
    <source>
        <dbReference type="UniProtKB" id="O43852"/>
    </source>
</evidence>
<evidence type="ECO:0000255" key="3"/>
<evidence type="ECO:0000255" key="4">
    <source>
        <dbReference type="PROSITE-ProRule" id="PRU00448"/>
    </source>
</evidence>
<evidence type="ECO:0000305" key="5"/>
<proteinExistence type="evidence at transcript level"/>
<dbReference type="EMBL" id="BX465210">
    <property type="protein sequence ID" value="CAI11944.1"/>
    <property type="status" value="ALT_INIT"/>
    <property type="molecule type" value="Genomic_DNA"/>
</dbReference>
<dbReference type="EMBL" id="BC071361">
    <property type="protein sequence ID" value="AAH71361.1"/>
    <property type="molecule type" value="mRNA"/>
</dbReference>
<dbReference type="FunCoup" id="Q6IQP3">
    <property type="interactions" value="435"/>
</dbReference>
<dbReference type="STRING" id="7955.ENSDARP00000112921"/>
<dbReference type="GlyCosmos" id="Q6IQP3">
    <property type="glycosylation" value="1 site, No reported glycans"/>
</dbReference>
<dbReference type="PaxDb" id="7955-ENSDARP00000112921"/>
<dbReference type="AGR" id="ZFIN:ZDB-GENE-040625-166"/>
<dbReference type="ZFIN" id="ZDB-GENE-040625-166">
    <property type="gene designation" value="calua"/>
</dbReference>
<dbReference type="eggNOG" id="KOG4223">
    <property type="taxonomic scope" value="Eukaryota"/>
</dbReference>
<dbReference type="InParanoid" id="Q6IQP3"/>
<dbReference type="OrthoDB" id="293868at2759"/>
<dbReference type="PhylomeDB" id="Q6IQP3"/>
<dbReference type="TreeFam" id="TF314849"/>
<dbReference type="PRO" id="PR:Q6IQP3"/>
<dbReference type="Proteomes" id="UP000000437">
    <property type="component" value="Unplaced"/>
</dbReference>
<dbReference type="GO" id="GO:0005783">
    <property type="term" value="C:endoplasmic reticulum"/>
    <property type="evidence" value="ECO:0000318"/>
    <property type="project" value="GO_Central"/>
</dbReference>
<dbReference type="GO" id="GO:0005789">
    <property type="term" value="C:endoplasmic reticulum membrane"/>
    <property type="evidence" value="ECO:0000250"/>
    <property type="project" value="UniProtKB"/>
</dbReference>
<dbReference type="GO" id="GO:0005576">
    <property type="term" value="C:extracellular region"/>
    <property type="evidence" value="ECO:0000250"/>
    <property type="project" value="UniProtKB"/>
</dbReference>
<dbReference type="GO" id="GO:0005794">
    <property type="term" value="C:Golgi apparatus"/>
    <property type="evidence" value="ECO:0000250"/>
    <property type="project" value="UniProtKB"/>
</dbReference>
<dbReference type="GO" id="GO:0042470">
    <property type="term" value="C:melanosome"/>
    <property type="evidence" value="ECO:0007669"/>
    <property type="project" value="UniProtKB-SubCell"/>
</dbReference>
<dbReference type="GO" id="GO:0033018">
    <property type="term" value="C:sarcoplasmic reticulum lumen"/>
    <property type="evidence" value="ECO:0007669"/>
    <property type="project" value="UniProtKB-SubCell"/>
</dbReference>
<dbReference type="GO" id="GO:0005509">
    <property type="term" value="F:calcium ion binding"/>
    <property type="evidence" value="ECO:0000318"/>
    <property type="project" value="GO_Central"/>
</dbReference>
<dbReference type="FunFam" id="1.10.238.10:FF:000090">
    <property type="entry name" value="calumenin isoform X2"/>
    <property type="match status" value="1"/>
</dbReference>
<dbReference type="FunFam" id="1.10.238.10:FF:000109">
    <property type="entry name" value="calumenin isoform X2"/>
    <property type="match status" value="1"/>
</dbReference>
<dbReference type="FunFam" id="1.10.238.10:FF:000110">
    <property type="entry name" value="calumenin isoform X2"/>
    <property type="match status" value="1"/>
</dbReference>
<dbReference type="Gene3D" id="1.10.238.10">
    <property type="entry name" value="EF-hand"/>
    <property type="match status" value="2"/>
</dbReference>
<dbReference type="InterPro" id="IPR011992">
    <property type="entry name" value="EF-hand-dom_pair"/>
</dbReference>
<dbReference type="InterPro" id="IPR018247">
    <property type="entry name" value="EF_Hand_1_Ca_BS"/>
</dbReference>
<dbReference type="InterPro" id="IPR002048">
    <property type="entry name" value="EF_hand_dom"/>
</dbReference>
<dbReference type="PANTHER" id="PTHR10827:SF76">
    <property type="entry name" value="CALUMENIN"/>
    <property type="match status" value="1"/>
</dbReference>
<dbReference type="PANTHER" id="PTHR10827">
    <property type="entry name" value="RETICULOCALBIN"/>
    <property type="match status" value="1"/>
</dbReference>
<dbReference type="Pfam" id="PF13202">
    <property type="entry name" value="EF-hand_5"/>
    <property type="match status" value="1"/>
</dbReference>
<dbReference type="Pfam" id="PF13499">
    <property type="entry name" value="EF-hand_7"/>
    <property type="match status" value="2"/>
</dbReference>
<dbReference type="SMART" id="SM00054">
    <property type="entry name" value="EFh"/>
    <property type="match status" value="4"/>
</dbReference>
<dbReference type="SUPFAM" id="SSF47473">
    <property type="entry name" value="EF-hand"/>
    <property type="match status" value="2"/>
</dbReference>
<dbReference type="PROSITE" id="PS00018">
    <property type="entry name" value="EF_HAND_1"/>
    <property type="match status" value="4"/>
</dbReference>
<dbReference type="PROSITE" id="PS50222">
    <property type="entry name" value="EF_HAND_2"/>
    <property type="match status" value="6"/>
</dbReference>
<sequence length="315" mass="37141">MEIRPLLMCFALCVVYATSKPTEKKDRVHHDAPLSSKEHDDGTNFEYDHDAFLGEEEAKTFDDLTPEESKNRLGKIVEKIDADEDGFVTEAELKAWIKKAQKKYIYDNVERQWKDFDLNNDRMISWEEYKNVTYGTYLDDPEPDDGYNYKQMMARDERRFKMADGNGDHIADKEEFTAFLHPEEYEHMKDIVVLETMEDIDKNGDGFIDLEEYIGDMYNHEDEMDEPEWVATEREQFSEFRDKNKDGKMDREETMDWILPADYDHAEAEAKHLVYESDTNKDGKLTKEEILNKYDLFVGSQATDFGEALVRHDEF</sequence>
<organism>
    <name type="scientific">Danio rerio</name>
    <name type="common">Zebrafish</name>
    <name type="synonym">Brachydanio rerio</name>
    <dbReference type="NCBI Taxonomy" id="7955"/>
    <lineage>
        <taxon>Eukaryota</taxon>
        <taxon>Metazoa</taxon>
        <taxon>Chordata</taxon>
        <taxon>Craniata</taxon>
        <taxon>Vertebrata</taxon>
        <taxon>Euteleostomi</taxon>
        <taxon>Actinopterygii</taxon>
        <taxon>Neopterygii</taxon>
        <taxon>Teleostei</taxon>
        <taxon>Ostariophysi</taxon>
        <taxon>Cypriniformes</taxon>
        <taxon>Danionidae</taxon>
        <taxon>Danioninae</taxon>
        <taxon>Danio</taxon>
    </lineage>
</organism>
<name>CALUA_DANRE</name>
<reference key="1">
    <citation type="journal article" date="2013" name="Nature">
        <title>The zebrafish reference genome sequence and its relationship to the human genome.</title>
        <authorList>
            <person name="Howe K."/>
            <person name="Clark M.D."/>
            <person name="Torroja C.F."/>
            <person name="Torrance J."/>
            <person name="Berthelot C."/>
            <person name="Muffato M."/>
            <person name="Collins J.E."/>
            <person name="Humphray S."/>
            <person name="McLaren K."/>
            <person name="Matthews L."/>
            <person name="McLaren S."/>
            <person name="Sealy I."/>
            <person name="Caccamo M."/>
            <person name="Churcher C."/>
            <person name="Scott C."/>
            <person name="Barrett J.C."/>
            <person name="Koch R."/>
            <person name="Rauch G.J."/>
            <person name="White S."/>
            <person name="Chow W."/>
            <person name="Kilian B."/>
            <person name="Quintais L.T."/>
            <person name="Guerra-Assuncao J.A."/>
            <person name="Zhou Y."/>
            <person name="Gu Y."/>
            <person name="Yen J."/>
            <person name="Vogel J.H."/>
            <person name="Eyre T."/>
            <person name="Redmond S."/>
            <person name="Banerjee R."/>
            <person name="Chi J."/>
            <person name="Fu B."/>
            <person name="Langley E."/>
            <person name="Maguire S.F."/>
            <person name="Laird G.K."/>
            <person name="Lloyd D."/>
            <person name="Kenyon E."/>
            <person name="Donaldson S."/>
            <person name="Sehra H."/>
            <person name="Almeida-King J."/>
            <person name="Loveland J."/>
            <person name="Trevanion S."/>
            <person name="Jones M."/>
            <person name="Quail M."/>
            <person name="Willey D."/>
            <person name="Hunt A."/>
            <person name="Burton J."/>
            <person name="Sims S."/>
            <person name="McLay K."/>
            <person name="Plumb B."/>
            <person name="Davis J."/>
            <person name="Clee C."/>
            <person name="Oliver K."/>
            <person name="Clark R."/>
            <person name="Riddle C."/>
            <person name="Elliot D."/>
            <person name="Threadgold G."/>
            <person name="Harden G."/>
            <person name="Ware D."/>
            <person name="Begum S."/>
            <person name="Mortimore B."/>
            <person name="Kerry G."/>
            <person name="Heath P."/>
            <person name="Phillimore B."/>
            <person name="Tracey A."/>
            <person name="Corby N."/>
            <person name="Dunn M."/>
            <person name="Johnson C."/>
            <person name="Wood J."/>
            <person name="Clark S."/>
            <person name="Pelan S."/>
            <person name="Griffiths G."/>
            <person name="Smith M."/>
            <person name="Glithero R."/>
            <person name="Howden P."/>
            <person name="Barker N."/>
            <person name="Lloyd C."/>
            <person name="Stevens C."/>
            <person name="Harley J."/>
            <person name="Holt K."/>
            <person name="Panagiotidis G."/>
            <person name="Lovell J."/>
            <person name="Beasley H."/>
            <person name="Henderson C."/>
            <person name="Gordon D."/>
            <person name="Auger K."/>
            <person name="Wright D."/>
            <person name="Collins J."/>
            <person name="Raisen C."/>
            <person name="Dyer L."/>
            <person name="Leung K."/>
            <person name="Robertson L."/>
            <person name="Ambridge K."/>
            <person name="Leongamornlert D."/>
            <person name="McGuire S."/>
            <person name="Gilderthorp R."/>
            <person name="Griffiths C."/>
            <person name="Manthravadi D."/>
            <person name="Nichol S."/>
            <person name="Barker G."/>
            <person name="Whitehead S."/>
            <person name="Kay M."/>
            <person name="Brown J."/>
            <person name="Murnane C."/>
            <person name="Gray E."/>
            <person name="Humphries M."/>
            <person name="Sycamore N."/>
            <person name="Barker D."/>
            <person name="Saunders D."/>
            <person name="Wallis J."/>
            <person name="Babbage A."/>
            <person name="Hammond S."/>
            <person name="Mashreghi-Mohammadi M."/>
            <person name="Barr L."/>
            <person name="Martin S."/>
            <person name="Wray P."/>
            <person name="Ellington A."/>
            <person name="Matthews N."/>
            <person name="Ellwood M."/>
            <person name="Woodmansey R."/>
            <person name="Clark G."/>
            <person name="Cooper J."/>
            <person name="Tromans A."/>
            <person name="Grafham D."/>
            <person name="Skuce C."/>
            <person name="Pandian R."/>
            <person name="Andrews R."/>
            <person name="Harrison E."/>
            <person name="Kimberley A."/>
            <person name="Garnett J."/>
            <person name="Fosker N."/>
            <person name="Hall R."/>
            <person name="Garner P."/>
            <person name="Kelly D."/>
            <person name="Bird C."/>
            <person name="Palmer S."/>
            <person name="Gehring I."/>
            <person name="Berger A."/>
            <person name="Dooley C.M."/>
            <person name="Ersan-Urun Z."/>
            <person name="Eser C."/>
            <person name="Geiger H."/>
            <person name="Geisler M."/>
            <person name="Karotki L."/>
            <person name="Kirn A."/>
            <person name="Konantz J."/>
            <person name="Konantz M."/>
            <person name="Oberlander M."/>
            <person name="Rudolph-Geiger S."/>
            <person name="Teucke M."/>
            <person name="Lanz C."/>
            <person name="Raddatz G."/>
            <person name="Osoegawa K."/>
            <person name="Zhu B."/>
            <person name="Rapp A."/>
            <person name="Widaa S."/>
            <person name="Langford C."/>
            <person name="Yang F."/>
            <person name="Schuster S.C."/>
            <person name="Carter N.P."/>
            <person name="Harrow J."/>
            <person name="Ning Z."/>
            <person name="Herrero J."/>
            <person name="Searle S.M."/>
            <person name="Enright A."/>
            <person name="Geisler R."/>
            <person name="Plasterk R.H."/>
            <person name="Lee C."/>
            <person name="Westerfield M."/>
            <person name="de Jong P.J."/>
            <person name="Zon L.I."/>
            <person name="Postlethwait J.H."/>
            <person name="Nusslein-Volhard C."/>
            <person name="Hubbard T.J."/>
            <person name="Roest Crollius H."/>
            <person name="Rogers J."/>
            <person name="Stemple D.L."/>
        </authorList>
    </citation>
    <scope>NUCLEOTIDE SEQUENCE [LARGE SCALE GENOMIC DNA]</scope>
    <source>
        <strain>Tuebingen</strain>
    </source>
</reference>
<reference key="2">
    <citation type="submission" date="2004-06" db="EMBL/GenBank/DDBJ databases">
        <authorList>
            <consortium name="NIH - Zebrafish Gene Collection (ZGC) project"/>
        </authorList>
    </citation>
    <scope>NUCLEOTIDE SEQUENCE [LARGE SCALE MRNA]</scope>
    <source>
        <tissue>Embryo</tissue>
    </source>
</reference>
<accession>Q6IQP3</accession>
<accession>Q5RHU9</accession>
<feature type="signal peptide" evidence="1">
    <location>
        <begin position="1"/>
        <end position="19"/>
    </location>
</feature>
<feature type="chain" id="PRO_0000364193" description="Calumenin-A">
    <location>
        <begin position="20"/>
        <end position="315"/>
    </location>
</feature>
<feature type="domain" description="EF-hand 1" evidence="4">
    <location>
        <begin position="68"/>
        <end position="103"/>
    </location>
</feature>
<feature type="domain" description="EF-hand 2" evidence="4">
    <location>
        <begin position="104"/>
        <end position="139"/>
    </location>
</feature>
<feature type="domain" description="EF-hand 3" evidence="4">
    <location>
        <begin position="151"/>
        <end position="186"/>
    </location>
</feature>
<feature type="domain" description="EF-hand 4" evidence="4">
    <location>
        <begin position="188"/>
        <end position="223"/>
    </location>
</feature>
<feature type="domain" description="EF-hand 5" evidence="4">
    <location>
        <begin position="229"/>
        <end position="264"/>
    </location>
</feature>
<feature type="domain" description="EF-hand 6" evidence="4">
    <location>
        <begin position="265"/>
        <end position="300"/>
    </location>
</feature>
<feature type="short sequence motif" description="Prevents secretion from ER" evidence="1">
    <location>
        <begin position="312"/>
        <end position="315"/>
    </location>
</feature>
<feature type="binding site" evidence="4">
    <location>
        <position position="81"/>
    </location>
    <ligand>
        <name>Ca(2+)</name>
        <dbReference type="ChEBI" id="CHEBI:29108"/>
        <label>1</label>
    </ligand>
</feature>
<feature type="binding site" evidence="4">
    <location>
        <position position="83"/>
    </location>
    <ligand>
        <name>Ca(2+)</name>
        <dbReference type="ChEBI" id="CHEBI:29108"/>
        <label>1</label>
    </ligand>
</feature>
<feature type="binding site" evidence="4">
    <location>
        <position position="85"/>
    </location>
    <ligand>
        <name>Ca(2+)</name>
        <dbReference type="ChEBI" id="CHEBI:29108"/>
        <label>1</label>
    </ligand>
</feature>
<feature type="binding site" evidence="4">
    <location>
        <position position="92"/>
    </location>
    <ligand>
        <name>Ca(2+)</name>
        <dbReference type="ChEBI" id="CHEBI:29108"/>
        <label>1</label>
    </ligand>
</feature>
<feature type="binding site" evidence="4">
    <location>
        <position position="117"/>
    </location>
    <ligand>
        <name>Ca(2+)</name>
        <dbReference type="ChEBI" id="CHEBI:29108"/>
        <label>2</label>
    </ligand>
</feature>
<feature type="binding site" evidence="4">
    <location>
        <position position="119"/>
    </location>
    <ligand>
        <name>Ca(2+)</name>
        <dbReference type="ChEBI" id="CHEBI:29108"/>
        <label>2</label>
    </ligand>
</feature>
<feature type="binding site" evidence="4">
    <location>
        <position position="121"/>
    </location>
    <ligand>
        <name>Ca(2+)</name>
        <dbReference type="ChEBI" id="CHEBI:29108"/>
        <label>2</label>
    </ligand>
</feature>
<feature type="binding site" evidence="4">
    <location>
        <position position="123"/>
    </location>
    <ligand>
        <name>Ca(2+)</name>
        <dbReference type="ChEBI" id="CHEBI:29108"/>
        <label>2</label>
    </ligand>
</feature>
<feature type="binding site" evidence="4">
    <location>
        <position position="128"/>
    </location>
    <ligand>
        <name>Ca(2+)</name>
        <dbReference type="ChEBI" id="CHEBI:29108"/>
        <label>2</label>
    </ligand>
</feature>
<feature type="binding site" evidence="5">
    <location>
        <position position="164"/>
    </location>
    <ligand>
        <name>Ca(2+)</name>
        <dbReference type="ChEBI" id="CHEBI:29108"/>
        <label>3</label>
    </ligand>
</feature>
<feature type="binding site" evidence="5">
    <location>
        <position position="166"/>
    </location>
    <ligand>
        <name>Ca(2+)</name>
        <dbReference type="ChEBI" id="CHEBI:29108"/>
        <label>3</label>
    </ligand>
</feature>
<feature type="binding site" evidence="5">
    <location>
        <position position="168"/>
    </location>
    <ligand>
        <name>Ca(2+)</name>
        <dbReference type="ChEBI" id="CHEBI:29108"/>
        <label>3</label>
    </ligand>
</feature>
<feature type="binding site" evidence="5">
    <location>
        <position position="175"/>
    </location>
    <ligand>
        <name>Ca(2+)</name>
        <dbReference type="ChEBI" id="CHEBI:29108"/>
        <label>3</label>
    </ligand>
</feature>
<feature type="binding site" evidence="4">
    <location>
        <position position="201"/>
    </location>
    <ligand>
        <name>Ca(2+)</name>
        <dbReference type="ChEBI" id="CHEBI:29108"/>
        <label>4</label>
    </ligand>
</feature>
<feature type="binding site" evidence="4">
    <location>
        <position position="203"/>
    </location>
    <ligand>
        <name>Ca(2+)</name>
        <dbReference type="ChEBI" id="CHEBI:29108"/>
        <label>4</label>
    </ligand>
</feature>
<feature type="binding site" evidence="4">
    <location>
        <position position="205"/>
    </location>
    <ligand>
        <name>Ca(2+)</name>
        <dbReference type="ChEBI" id="CHEBI:29108"/>
        <label>4</label>
    </ligand>
</feature>
<feature type="binding site" evidence="4">
    <location>
        <position position="212"/>
    </location>
    <ligand>
        <name>Ca(2+)</name>
        <dbReference type="ChEBI" id="CHEBI:29108"/>
        <label>4</label>
    </ligand>
</feature>
<feature type="binding site" evidence="5">
    <location>
        <position position="242"/>
    </location>
    <ligand>
        <name>Ca(2+)</name>
        <dbReference type="ChEBI" id="CHEBI:29108"/>
        <label>5</label>
    </ligand>
</feature>
<feature type="binding site" evidence="5">
    <location>
        <position position="244"/>
    </location>
    <ligand>
        <name>Ca(2+)</name>
        <dbReference type="ChEBI" id="CHEBI:29108"/>
        <label>5</label>
    </ligand>
</feature>
<feature type="binding site" evidence="5">
    <location>
        <position position="246"/>
    </location>
    <ligand>
        <name>Ca(2+)</name>
        <dbReference type="ChEBI" id="CHEBI:29108"/>
        <label>5</label>
    </ligand>
</feature>
<feature type="binding site" evidence="5">
    <location>
        <position position="248"/>
    </location>
    <ligand>
        <name>Ca(2+)</name>
        <dbReference type="ChEBI" id="CHEBI:29108"/>
        <label>5</label>
    </ligand>
</feature>
<feature type="binding site" evidence="5">
    <location>
        <position position="253"/>
    </location>
    <ligand>
        <name>Ca(2+)</name>
        <dbReference type="ChEBI" id="CHEBI:29108"/>
        <label>5</label>
    </ligand>
</feature>
<feature type="binding site" evidence="4">
    <location>
        <position position="278"/>
    </location>
    <ligand>
        <name>Ca(2+)</name>
        <dbReference type="ChEBI" id="CHEBI:29108"/>
        <label>6</label>
    </ligand>
</feature>
<feature type="binding site" evidence="4">
    <location>
        <position position="280"/>
    </location>
    <ligand>
        <name>Ca(2+)</name>
        <dbReference type="ChEBI" id="CHEBI:29108"/>
        <label>6</label>
    </ligand>
</feature>
<feature type="binding site" evidence="4">
    <location>
        <position position="282"/>
    </location>
    <ligand>
        <name>Ca(2+)</name>
        <dbReference type="ChEBI" id="CHEBI:29108"/>
        <label>6</label>
    </ligand>
</feature>
<feature type="binding site" evidence="4">
    <location>
        <position position="284"/>
    </location>
    <ligand>
        <name>Ca(2+)</name>
        <dbReference type="ChEBI" id="CHEBI:29108"/>
        <label>6</label>
    </ligand>
</feature>
<feature type="binding site" evidence="4">
    <location>
        <position position="289"/>
    </location>
    <ligand>
        <name>Ca(2+)</name>
        <dbReference type="ChEBI" id="CHEBI:29108"/>
        <label>6</label>
    </ligand>
</feature>
<feature type="glycosylation site" description="N-linked (GlcNAc...) asparagine" evidence="3">
    <location>
        <position position="131"/>
    </location>
</feature>
<comment type="function">
    <text evidence="1">Involved in regulation of vitamin K-dependent carboxylation of multiple N-terminal glutamate residues. Seems to inhibit gamma-carboxylase ggcx. Binds 7 calcium ions with a low affinity (By similarity).</text>
</comment>
<comment type="subunit">
    <text evidence="1">Interacts with ggcx.</text>
</comment>
<comment type="subcellular location">
    <subcellularLocation>
        <location evidence="2">Endoplasmic reticulum membrane</location>
    </subcellularLocation>
    <subcellularLocation>
        <location evidence="2">Golgi apparatus</location>
    </subcellularLocation>
    <subcellularLocation>
        <location evidence="2">Secreted</location>
    </subcellularLocation>
    <subcellularLocation>
        <location evidence="2">Melanosome</location>
    </subcellularLocation>
    <subcellularLocation>
        <location evidence="2">Sarcoplasmic reticulum lumen</location>
    </subcellularLocation>
</comment>
<comment type="similarity">
    <text evidence="5">Belongs to the CREC family.</text>
</comment>
<comment type="sequence caution" evidence="5">
    <conflict type="erroneous initiation">
        <sequence resource="EMBL-CDS" id="CAI11944"/>
    </conflict>
</comment>
<keyword id="KW-0106">Calcium</keyword>
<keyword id="KW-0256">Endoplasmic reticulum</keyword>
<keyword id="KW-0325">Glycoprotein</keyword>
<keyword id="KW-0333">Golgi apparatus</keyword>
<keyword id="KW-0472">Membrane</keyword>
<keyword id="KW-0479">Metal-binding</keyword>
<keyword id="KW-1185">Reference proteome</keyword>
<keyword id="KW-0677">Repeat</keyword>
<keyword id="KW-0703">Sarcoplasmic reticulum</keyword>
<keyword id="KW-0964">Secreted</keyword>
<keyword id="KW-0732">Signal</keyword>
<protein>
    <recommendedName>
        <fullName>Calumenin-A</fullName>
    </recommendedName>
</protein>